<dbReference type="EMBL" id="AB005232">
    <property type="protein sequence ID" value="BAB08772.1"/>
    <property type="status" value="ALT_SEQ"/>
    <property type="molecule type" value="Genomic_DNA"/>
</dbReference>
<dbReference type="EMBL" id="CP002688">
    <property type="protein sequence ID" value="AED96558.1"/>
    <property type="molecule type" value="Genomic_DNA"/>
</dbReference>
<dbReference type="EMBL" id="CP002688">
    <property type="protein sequence ID" value="AED96559.1"/>
    <property type="molecule type" value="Genomic_DNA"/>
</dbReference>
<dbReference type="EMBL" id="AY127021">
    <property type="protein sequence ID" value="AAM83245.1"/>
    <property type="molecule type" value="mRNA"/>
</dbReference>
<dbReference type="EMBL" id="BT004509">
    <property type="protein sequence ID" value="AAO42755.1"/>
    <property type="molecule type" value="mRNA"/>
</dbReference>
<dbReference type="EMBL" id="AK317764">
    <property type="protein sequence ID" value="BAH20420.1"/>
    <property type="molecule type" value="mRNA"/>
</dbReference>
<dbReference type="RefSeq" id="NP_001032075.1">
    <molecule id="Q8L7T9-2"/>
    <property type="nucleotide sequence ID" value="NM_001036998.1"/>
</dbReference>
<dbReference type="RefSeq" id="NP_568817.1">
    <molecule id="Q8L7T9-1"/>
    <property type="nucleotide sequence ID" value="NM_124875.5"/>
</dbReference>
<dbReference type="FunCoup" id="Q8L7T9">
    <property type="interactions" value="13"/>
</dbReference>
<dbReference type="STRING" id="3702.Q8L7T9"/>
<dbReference type="iPTMnet" id="Q8L7T9"/>
<dbReference type="PaxDb" id="3702-AT5G54930.1"/>
<dbReference type="ProteomicsDB" id="187052"/>
<dbReference type="ProteomicsDB" id="187320"/>
<dbReference type="EnsemblPlants" id="AT5G54930.1">
    <molecule id="Q8L7T9-1"/>
    <property type="protein sequence ID" value="AT5G54930.1"/>
    <property type="gene ID" value="AT5G54930"/>
</dbReference>
<dbReference type="EnsemblPlants" id="AT5G54930.2">
    <molecule id="Q8L7T9-2"/>
    <property type="protein sequence ID" value="AT5G54930.2"/>
    <property type="gene ID" value="AT5G54930"/>
</dbReference>
<dbReference type="GeneID" id="835584"/>
<dbReference type="Gramene" id="AT5G54930.1">
    <molecule id="Q8L7T9-1"/>
    <property type="protein sequence ID" value="AT5G54930.1"/>
    <property type="gene ID" value="AT5G54930"/>
</dbReference>
<dbReference type="Gramene" id="AT5G54930.2">
    <molecule id="Q8L7T9-2"/>
    <property type="protein sequence ID" value="AT5G54930.2"/>
    <property type="gene ID" value="AT5G54930"/>
</dbReference>
<dbReference type="KEGG" id="ath:AT5G54930"/>
<dbReference type="Araport" id="AT5G54930"/>
<dbReference type="TAIR" id="AT5G54930">
    <property type="gene designation" value="MNM1"/>
</dbReference>
<dbReference type="eggNOG" id="KOG1347">
    <property type="taxonomic scope" value="Eukaryota"/>
</dbReference>
<dbReference type="HOGENOM" id="CLU_1055042_0_0_1"/>
<dbReference type="InParanoid" id="Q8L7T9"/>
<dbReference type="OMA" id="LMNYGIG"/>
<dbReference type="PhylomeDB" id="Q8L7T9"/>
<dbReference type="PRO" id="PR:Q8L7T9"/>
<dbReference type="Proteomes" id="UP000006548">
    <property type="component" value="Chromosome 5"/>
</dbReference>
<dbReference type="ExpressionAtlas" id="Q8L7T9">
    <property type="expression patterns" value="baseline and differential"/>
</dbReference>
<dbReference type="GO" id="GO:0000976">
    <property type="term" value="F:transcription cis-regulatory region binding"/>
    <property type="evidence" value="ECO:0000353"/>
    <property type="project" value="TAIR"/>
</dbReference>
<dbReference type="GO" id="GO:2000028">
    <property type="term" value="P:regulation of photoperiodism, flowering"/>
    <property type="evidence" value="ECO:0000315"/>
    <property type="project" value="UniProtKB"/>
</dbReference>
<dbReference type="InterPro" id="IPR045881">
    <property type="entry name" value="MNM1-like"/>
</dbReference>
<dbReference type="PANTHER" id="PTHR34682">
    <property type="entry name" value="AT HOOK MOTIF-CONTAINING PROTEIN"/>
    <property type="match status" value="1"/>
</dbReference>
<dbReference type="PANTHER" id="PTHR34682:SF1">
    <property type="entry name" value="PROTEIN METABOLIC NETWORK MODULATOR 1"/>
    <property type="match status" value="1"/>
</dbReference>
<protein>
    <recommendedName>
        <fullName evidence="3">Protein METABOLIC NETWORK MODULATOR 1</fullName>
    </recommendedName>
</protein>
<proteinExistence type="evidence at transcript level"/>
<gene>
    <name evidence="3" type="primary">MNM1</name>
    <name evidence="5" type="ordered locus">At5g54930</name>
    <name evidence="6" type="ORF">MBG8.20</name>
</gene>
<name>MNM1_ARATH</name>
<feature type="chain" id="PRO_0000455089" description="Protein METABOLIC NETWORK MODULATOR 1">
    <location>
        <begin position="1"/>
        <end position="286"/>
    </location>
</feature>
<feature type="region of interest" description="Disordered" evidence="1">
    <location>
        <begin position="1"/>
        <end position="60"/>
    </location>
</feature>
<feature type="region of interest" description="Disordered" evidence="1">
    <location>
        <begin position="123"/>
        <end position="146"/>
    </location>
</feature>
<feature type="region of interest" description="Disordered" evidence="1">
    <location>
        <begin position="181"/>
        <end position="204"/>
    </location>
</feature>
<feature type="compositionally biased region" description="Basic and acidic residues" evidence="1">
    <location>
        <begin position="1"/>
        <end position="10"/>
    </location>
</feature>
<feature type="compositionally biased region" description="Basic residues" evidence="1">
    <location>
        <begin position="20"/>
        <end position="29"/>
    </location>
</feature>
<feature type="compositionally biased region" description="Basic and acidic residues" evidence="1">
    <location>
        <begin position="30"/>
        <end position="39"/>
    </location>
</feature>
<feature type="compositionally biased region" description="Basic residues" evidence="1">
    <location>
        <begin position="131"/>
        <end position="140"/>
    </location>
</feature>
<feature type="compositionally biased region" description="Polar residues" evidence="1">
    <location>
        <begin position="191"/>
        <end position="204"/>
    </location>
</feature>
<feature type="splice variant" id="VSP_061448" description="In isoform 2.">
    <location>
        <begin position="271"/>
        <end position="273"/>
    </location>
</feature>
<evidence type="ECO:0000256" key="1">
    <source>
        <dbReference type="SAM" id="MobiDB-lite"/>
    </source>
</evidence>
<evidence type="ECO:0000269" key="2">
    <source>
    </source>
</evidence>
<evidence type="ECO:0000303" key="3">
    <source>
    </source>
</evidence>
<evidence type="ECO:0000305" key="4"/>
<evidence type="ECO:0000312" key="5">
    <source>
        <dbReference type="Araport" id="AT5G54930"/>
    </source>
</evidence>
<evidence type="ECO:0000312" key="6">
    <source>
        <dbReference type="EMBL" id="BAB08772.1"/>
    </source>
</evidence>
<organism>
    <name type="scientific">Arabidopsis thaliana</name>
    <name type="common">Mouse-ear cress</name>
    <dbReference type="NCBI Taxonomy" id="3702"/>
    <lineage>
        <taxon>Eukaryota</taxon>
        <taxon>Viridiplantae</taxon>
        <taxon>Streptophyta</taxon>
        <taxon>Embryophyta</taxon>
        <taxon>Tracheophyta</taxon>
        <taxon>Spermatophyta</taxon>
        <taxon>Magnoliopsida</taxon>
        <taxon>eudicotyledons</taxon>
        <taxon>Gunneridae</taxon>
        <taxon>Pentapetalae</taxon>
        <taxon>rosids</taxon>
        <taxon>malvids</taxon>
        <taxon>Brassicales</taxon>
        <taxon>Brassicaceae</taxon>
        <taxon>Camelineae</taxon>
        <taxon>Arabidopsis</taxon>
    </lineage>
</organism>
<accession>Q8L7T9</accession>
<accession>Q2V2Y5</accession>
<accession>Q9FFT7</accession>
<sequence length="286" mass="31545">MEKESHEENNHTISGDLTAKRKRGRPRKQLKLESNEHSLGHSPSFSRSQQQSRQRNDDEAMVGQPISGVIEATFEAGFLLSVKVGNSDSMLRGVVFKPGHCDPVSVDNDVAPDVPMIRRNSDVMHHDGSAKRGRKSRFREKRGSGVRSRALVPVPIQPAHPTIPNNLIVPVVLQPAHLENGGERVPIDHSPMQTETGSQASGASNGKPFETLLTQVMNKGQVQHTTQSVEPESDEQALSIEPLQAIHPIHPVHMLKPMPSYGRGKMTELLQAVQENVRETHFSQGH</sequence>
<comment type="function">
    <text evidence="2">Lineage-specific modulator of primary metabolism (PubMed:25202318). Influences flowering time (PubMed:25202318).</text>
</comment>
<comment type="alternative products">
    <event type="alternative splicing"/>
    <isoform>
        <id>Q8L7T9-1</id>
        <name>1</name>
        <sequence type="displayed"/>
    </isoform>
    <isoform>
        <id>Q8L7T9-2</id>
        <name>2</name>
        <sequence type="described" ref="VSP_061448"/>
    </isoform>
</comment>
<comment type="tissue specificity">
    <text evidence="2">Mailny observed in young seedlings and in emerging leaves.</text>
</comment>
<comment type="developmental stage">
    <text evidence="2">In young seedlings, mostly expressed in the newly emerging leaves and in the vasculature of roots and cotyledons (PubMed:25202318). Later fades out of the vasculature but remains at high levels in emerging leaves (PubMed:25202318). Present at the base of maturing leaves but excluded from the vasculature (PubMed:25202318). In short days conditions, accumulates in newly emerging leaves, but as these leaves mature, gradually lost in the lamina until being confined to the margin (PubMed:25202318). Disapears in mature leaves (PubMed:25202318).</text>
</comment>
<comment type="disruption phenotype">
    <text evidence="2">Slightly earlier flowering time under both short and long-day conditions (PubMed:25202318). Altered metabolites profile (PubMed:25202318).</text>
</comment>
<comment type="sequence caution" evidence="4">
    <conflict type="erroneous gene model prediction">
        <sequence resource="EMBL-CDS" id="BAB08772"/>
    </conflict>
</comment>
<keyword id="KW-0025">Alternative splicing</keyword>
<keyword id="KW-1185">Reference proteome</keyword>
<reference key="1">
    <citation type="journal article" date="1997" name="DNA Res.">
        <title>Structural analysis of Arabidopsis thaliana chromosome 5. I. Sequence features of the 1.6 Mb regions covered by twenty physically assigned P1 clones.</title>
        <authorList>
            <person name="Sato S."/>
            <person name="Kotani H."/>
            <person name="Nakamura Y."/>
            <person name="Kaneko T."/>
            <person name="Asamizu E."/>
            <person name="Fukami M."/>
            <person name="Miyajima N."/>
            <person name="Tabata S."/>
        </authorList>
    </citation>
    <scope>NUCLEOTIDE SEQUENCE [LARGE SCALE GENOMIC DNA]</scope>
    <source>
        <strain>cv. Columbia</strain>
    </source>
</reference>
<reference key="2">
    <citation type="journal article" date="2017" name="Plant J.">
        <title>Araport11: a complete reannotation of the Arabidopsis thaliana reference genome.</title>
        <authorList>
            <person name="Cheng C.Y."/>
            <person name="Krishnakumar V."/>
            <person name="Chan A.P."/>
            <person name="Thibaud-Nissen F."/>
            <person name="Schobel S."/>
            <person name="Town C.D."/>
        </authorList>
    </citation>
    <scope>GENOME REANNOTATION</scope>
    <source>
        <strain>cv. Columbia</strain>
    </source>
</reference>
<reference key="3">
    <citation type="journal article" date="2003" name="Science">
        <title>Empirical analysis of transcriptional activity in the Arabidopsis genome.</title>
        <authorList>
            <person name="Yamada K."/>
            <person name="Lim J."/>
            <person name="Dale J.M."/>
            <person name="Chen H."/>
            <person name="Shinn P."/>
            <person name="Palm C.J."/>
            <person name="Southwick A.M."/>
            <person name="Wu H.C."/>
            <person name="Kim C.J."/>
            <person name="Nguyen M."/>
            <person name="Pham P.K."/>
            <person name="Cheuk R.F."/>
            <person name="Karlin-Newmann G."/>
            <person name="Liu S.X."/>
            <person name="Lam B."/>
            <person name="Sakano H."/>
            <person name="Wu T."/>
            <person name="Yu G."/>
            <person name="Miranda M."/>
            <person name="Quach H.L."/>
            <person name="Tripp M."/>
            <person name="Chang C.H."/>
            <person name="Lee J.M."/>
            <person name="Toriumi M.J."/>
            <person name="Chan M.M."/>
            <person name="Tang C.C."/>
            <person name="Onodera C.S."/>
            <person name="Deng J.M."/>
            <person name="Akiyama K."/>
            <person name="Ansari Y."/>
            <person name="Arakawa T."/>
            <person name="Banh J."/>
            <person name="Banno F."/>
            <person name="Bowser L."/>
            <person name="Brooks S.Y."/>
            <person name="Carninci P."/>
            <person name="Chao Q."/>
            <person name="Choy N."/>
            <person name="Enju A."/>
            <person name="Goldsmith A.D."/>
            <person name="Gurjal M."/>
            <person name="Hansen N.F."/>
            <person name="Hayashizaki Y."/>
            <person name="Johnson-Hopson C."/>
            <person name="Hsuan V.W."/>
            <person name="Iida K."/>
            <person name="Karnes M."/>
            <person name="Khan S."/>
            <person name="Koesema E."/>
            <person name="Ishida J."/>
            <person name="Jiang P.X."/>
            <person name="Jones T."/>
            <person name="Kawai J."/>
            <person name="Kamiya A."/>
            <person name="Meyers C."/>
            <person name="Nakajima M."/>
            <person name="Narusaka M."/>
            <person name="Seki M."/>
            <person name="Sakurai T."/>
            <person name="Satou M."/>
            <person name="Tamse R."/>
            <person name="Vaysberg M."/>
            <person name="Wallender E.K."/>
            <person name="Wong C."/>
            <person name="Yamamura Y."/>
            <person name="Yuan S."/>
            <person name="Shinozaki K."/>
            <person name="Davis R.W."/>
            <person name="Theologis A."/>
            <person name="Ecker J.R."/>
        </authorList>
    </citation>
    <scope>NUCLEOTIDE SEQUENCE [LARGE SCALE MRNA] (ISOFORM 1)</scope>
    <source>
        <strain>cv. Columbia</strain>
    </source>
</reference>
<reference key="4">
    <citation type="journal article" date="2009" name="DNA Res.">
        <title>Analysis of multiple occurrences of alternative splicing events in Arabidopsis thaliana using novel sequenced full-length cDNAs.</title>
        <authorList>
            <person name="Iida K."/>
            <person name="Fukami-Kobayashi K."/>
            <person name="Toyoda A."/>
            <person name="Sakaki Y."/>
            <person name="Kobayashi M."/>
            <person name="Seki M."/>
            <person name="Shinozaki K."/>
        </authorList>
    </citation>
    <scope>NUCLEOTIDE SEQUENCE [LARGE SCALE MRNA] (ISOFORM 2)</scope>
    <source>
        <strain>cv. Columbia</strain>
        <tissue>Flower</tissue>
        <tissue>Silique</tissue>
    </source>
</reference>
<reference key="5">
    <citation type="journal article" date="2014" name="Front. Plant Sci.">
        <title>The AT-hook motif-encoding gene METABOLIC NETWORK MODULATOR 1 underlies natural variation in Arabidopsis primary metabolism.</title>
        <authorList>
            <person name="Li B."/>
            <person name="Kliebenstein D.J."/>
        </authorList>
    </citation>
    <scope>FUNCTION</scope>
    <scope>DISRUPTION PHENOTYPE</scope>
    <scope>TISSUE SPECIFICITY</scope>
    <scope>DEVELOPMENTAL STAGE</scope>
    <source>
        <strain>cv. Columbia</strain>
    </source>
</reference>